<keyword id="KW-0903">Direct protein sequencing</keyword>
<keyword id="KW-1015">Disulfide bond</keyword>
<keyword id="KW-0325">Glycoprotein</keyword>
<keyword id="KW-0646">Protease inhibitor</keyword>
<keyword id="KW-0677">Repeat</keyword>
<keyword id="KW-0964">Secreted</keyword>
<keyword id="KW-0722">Serine protease inhibitor</keyword>
<protein>
    <recommendedName>
        <fullName>Ovomucoid</fullName>
    </recommendedName>
</protein>
<sequence length="54" mass="5807">LVTVDCSDYPKPSCTLEDKPLCGSDNQTYSNKCSFCNAVVDSNGTLTLSHFGKC</sequence>
<organism>
    <name type="scientific">Megapodius freycinet</name>
    <name type="common">Dusky scrubfowl</name>
    <dbReference type="NCBI Taxonomy" id="8979"/>
    <lineage>
        <taxon>Eukaryota</taxon>
        <taxon>Metazoa</taxon>
        <taxon>Chordata</taxon>
        <taxon>Craniata</taxon>
        <taxon>Vertebrata</taxon>
        <taxon>Euteleostomi</taxon>
        <taxon>Archelosauria</taxon>
        <taxon>Archosauria</taxon>
        <taxon>Dinosauria</taxon>
        <taxon>Saurischia</taxon>
        <taxon>Theropoda</taxon>
        <taxon>Coelurosauria</taxon>
        <taxon>Aves</taxon>
        <taxon>Neognathae</taxon>
        <taxon>Galloanserae</taxon>
        <taxon>Galliformes</taxon>
        <taxon>Megapodiidae</taxon>
        <taxon>Megapodius</taxon>
    </lineage>
</organism>
<comment type="subcellular location">
    <subcellularLocation>
        <location>Secreted</location>
    </subcellularLocation>
</comment>
<comment type="domain">
    <text>Avian ovomucoid consists of three homologous, tandem Kazal family inhibitory domains.</text>
</comment>
<proteinExistence type="evidence at protein level"/>
<accession>P05580</accession>
<evidence type="ECO:0000255" key="1">
    <source>
        <dbReference type="PROSITE-ProRule" id="PRU00798"/>
    </source>
</evidence>
<evidence type="ECO:0000269" key="2">
    <source>
    </source>
</evidence>
<reference key="1">
    <citation type="journal article" date="1987" name="Biochemistry">
        <title>Ovomucoid third domains from 100 avian species: isolation, sequences, and hypervariability of enzyme-inhibitor contact residues.</title>
        <authorList>
            <person name="Laskowski M. Jr."/>
            <person name="Kato I."/>
            <person name="Ardelt W."/>
            <person name="Cook J."/>
            <person name="Denton A."/>
            <person name="Empie M.W."/>
            <person name="Kohr W.J."/>
            <person name="Park S.J."/>
            <person name="Parks K."/>
            <person name="Schatzley B.L."/>
            <person name="Schoenberger O.L."/>
            <person name="Tashiro M."/>
            <person name="Vichot G."/>
            <person name="Whatley H.E."/>
            <person name="Wieczorek A."/>
            <person name="Wieczorek M."/>
        </authorList>
    </citation>
    <scope>PROTEIN SEQUENCE</scope>
</reference>
<name>IOVO_MEGFR</name>
<dbReference type="PIR" id="C31439">
    <property type="entry name" value="C31439"/>
</dbReference>
<dbReference type="SMR" id="P05580"/>
<dbReference type="iPTMnet" id="P05580"/>
<dbReference type="GO" id="GO:0005576">
    <property type="term" value="C:extracellular region"/>
    <property type="evidence" value="ECO:0007669"/>
    <property type="project" value="UniProtKB-SubCell"/>
</dbReference>
<dbReference type="GO" id="GO:0004867">
    <property type="term" value="F:serine-type endopeptidase inhibitor activity"/>
    <property type="evidence" value="ECO:0007669"/>
    <property type="project" value="UniProtKB-KW"/>
</dbReference>
<dbReference type="CDD" id="cd00104">
    <property type="entry name" value="KAZAL_FS"/>
    <property type="match status" value="1"/>
</dbReference>
<dbReference type="FunFam" id="3.30.60.30:FF:000037">
    <property type="entry name" value="Ovomucoid"/>
    <property type="match status" value="1"/>
</dbReference>
<dbReference type="Gene3D" id="3.30.60.30">
    <property type="match status" value="1"/>
</dbReference>
<dbReference type="InterPro" id="IPR051597">
    <property type="entry name" value="Bifunctional_prot_inhibitor"/>
</dbReference>
<dbReference type="InterPro" id="IPR002350">
    <property type="entry name" value="Kazal_dom"/>
</dbReference>
<dbReference type="InterPro" id="IPR036058">
    <property type="entry name" value="Kazal_dom_sf"/>
</dbReference>
<dbReference type="PANTHER" id="PTHR47729:SF1">
    <property type="entry name" value="OVOMUCOID-LIKE-RELATED"/>
    <property type="match status" value="1"/>
</dbReference>
<dbReference type="PANTHER" id="PTHR47729">
    <property type="entry name" value="SERINE PEPTIDASE INHIBITOR, KAZAL TYPE 2, TANDEM DUPLICATE 1-RELATED"/>
    <property type="match status" value="1"/>
</dbReference>
<dbReference type="Pfam" id="PF00050">
    <property type="entry name" value="Kazal_1"/>
    <property type="match status" value="1"/>
</dbReference>
<dbReference type="SMART" id="SM00280">
    <property type="entry name" value="KAZAL"/>
    <property type="match status" value="1"/>
</dbReference>
<dbReference type="SUPFAM" id="SSF100895">
    <property type="entry name" value="Kazal-type serine protease inhibitors"/>
    <property type="match status" value="1"/>
</dbReference>
<dbReference type="PROSITE" id="PS00282">
    <property type="entry name" value="KAZAL_1"/>
    <property type="match status" value="1"/>
</dbReference>
<dbReference type="PROSITE" id="PS51465">
    <property type="entry name" value="KAZAL_2"/>
    <property type="match status" value="1"/>
</dbReference>
<feature type="chain" id="PRO_0000073141" description="Ovomucoid">
    <location>
        <begin position="1" status="less than"/>
        <end position="54" status="greater than"/>
    </location>
</feature>
<feature type="domain" description="Kazal-like" evidence="1">
    <location>
        <begin position="4"/>
        <end position="54"/>
    </location>
</feature>
<feature type="site" description="Reactive bond 3">
    <location>
        <begin position="16"/>
        <end position="17"/>
    </location>
</feature>
<feature type="glycosylation site" description="N-linked (GlcNAc...) asparagine" evidence="2">
    <location>
        <position position="43"/>
    </location>
</feature>
<feature type="disulfide bond">
    <location>
        <begin position="6"/>
        <end position="36"/>
    </location>
</feature>
<feature type="disulfide bond">
    <location>
        <begin position="14"/>
        <end position="33"/>
    </location>
</feature>
<feature type="disulfide bond">
    <location>
        <begin position="22"/>
        <end position="54"/>
    </location>
</feature>
<feature type="non-terminal residue">
    <location>
        <position position="1"/>
    </location>
</feature>
<feature type="non-terminal residue">
    <location>
        <position position="54"/>
    </location>
</feature>